<dbReference type="EMBL" id="AP009484">
    <property type="protein sequence ID" value="BAH18469.1"/>
    <property type="molecule type" value="Genomic_DNA"/>
</dbReference>
<dbReference type="RefSeq" id="WP_015912261.1">
    <property type="nucleotide sequence ID" value="NC_011999.1"/>
</dbReference>
<dbReference type="SMR" id="B9E8F1"/>
<dbReference type="STRING" id="458233.MCCL_1762"/>
<dbReference type="GeneID" id="61130142"/>
<dbReference type="KEGG" id="mcl:MCCL_1762"/>
<dbReference type="eggNOG" id="COG0356">
    <property type="taxonomic scope" value="Bacteria"/>
</dbReference>
<dbReference type="HOGENOM" id="CLU_041018_2_3_9"/>
<dbReference type="OrthoDB" id="9789241at2"/>
<dbReference type="Proteomes" id="UP000001383">
    <property type="component" value="Chromosome"/>
</dbReference>
<dbReference type="GO" id="GO:0005886">
    <property type="term" value="C:plasma membrane"/>
    <property type="evidence" value="ECO:0007669"/>
    <property type="project" value="UniProtKB-SubCell"/>
</dbReference>
<dbReference type="GO" id="GO:0045259">
    <property type="term" value="C:proton-transporting ATP synthase complex"/>
    <property type="evidence" value="ECO:0007669"/>
    <property type="project" value="UniProtKB-KW"/>
</dbReference>
<dbReference type="GO" id="GO:0046933">
    <property type="term" value="F:proton-transporting ATP synthase activity, rotational mechanism"/>
    <property type="evidence" value="ECO:0007669"/>
    <property type="project" value="UniProtKB-UniRule"/>
</dbReference>
<dbReference type="GO" id="GO:0042777">
    <property type="term" value="P:proton motive force-driven plasma membrane ATP synthesis"/>
    <property type="evidence" value="ECO:0007669"/>
    <property type="project" value="TreeGrafter"/>
</dbReference>
<dbReference type="CDD" id="cd00310">
    <property type="entry name" value="ATP-synt_Fo_a_6"/>
    <property type="match status" value="1"/>
</dbReference>
<dbReference type="FunFam" id="1.20.120.220:FF:000005">
    <property type="entry name" value="ATP synthase subunit a"/>
    <property type="match status" value="1"/>
</dbReference>
<dbReference type="Gene3D" id="1.20.120.220">
    <property type="entry name" value="ATP synthase, F0 complex, subunit A"/>
    <property type="match status" value="1"/>
</dbReference>
<dbReference type="HAMAP" id="MF_01393">
    <property type="entry name" value="ATP_synth_a_bact"/>
    <property type="match status" value="1"/>
</dbReference>
<dbReference type="InterPro" id="IPR045082">
    <property type="entry name" value="ATP_syn_F0_a_bact/chloroplast"/>
</dbReference>
<dbReference type="InterPro" id="IPR000568">
    <property type="entry name" value="ATP_synth_F0_asu"/>
</dbReference>
<dbReference type="InterPro" id="IPR023011">
    <property type="entry name" value="ATP_synth_F0_asu_AS"/>
</dbReference>
<dbReference type="InterPro" id="IPR035908">
    <property type="entry name" value="F0_ATP_A_sf"/>
</dbReference>
<dbReference type="NCBIfam" id="TIGR01131">
    <property type="entry name" value="ATP_synt_6_or_A"/>
    <property type="match status" value="1"/>
</dbReference>
<dbReference type="NCBIfam" id="NF004479">
    <property type="entry name" value="PRK05815.1-4"/>
    <property type="match status" value="1"/>
</dbReference>
<dbReference type="PANTHER" id="PTHR42823">
    <property type="entry name" value="ATP SYNTHASE SUBUNIT A, CHLOROPLASTIC"/>
    <property type="match status" value="1"/>
</dbReference>
<dbReference type="PANTHER" id="PTHR42823:SF3">
    <property type="entry name" value="ATP SYNTHASE SUBUNIT A, CHLOROPLASTIC"/>
    <property type="match status" value="1"/>
</dbReference>
<dbReference type="Pfam" id="PF00119">
    <property type="entry name" value="ATP-synt_A"/>
    <property type="match status" value="1"/>
</dbReference>
<dbReference type="PRINTS" id="PR00123">
    <property type="entry name" value="ATPASEA"/>
</dbReference>
<dbReference type="SUPFAM" id="SSF81336">
    <property type="entry name" value="F1F0 ATP synthase subunit A"/>
    <property type="match status" value="1"/>
</dbReference>
<dbReference type="PROSITE" id="PS00449">
    <property type="entry name" value="ATPASE_A"/>
    <property type="match status" value="1"/>
</dbReference>
<comment type="function">
    <text evidence="1">Key component of the proton channel; it plays a direct role in the translocation of protons across the membrane.</text>
</comment>
<comment type="subunit">
    <text evidence="1">F-type ATPases have 2 components, CF(1) - the catalytic core - and CF(0) - the membrane proton channel. CF(1) has five subunits: alpha(3), beta(3), gamma(1), delta(1), epsilon(1). CF(0) has three main subunits: a(1), b(2) and c(9-12). The alpha and beta chains form an alternating ring which encloses part of the gamma chain. CF(1) is attached to CF(0) by a central stalk formed by the gamma and epsilon chains, while a peripheral stalk is formed by the delta and b chains.</text>
</comment>
<comment type="subcellular location">
    <subcellularLocation>
        <location evidence="1">Cell membrane</location>
        <topology evidence="1">Multi-pass membrane protein</topology>
    </subcellularLocation>
</comment>
<comment type="similarity">
    <text evidence="1">Belongs to the ATPase A chain family.</text>
</comment>
<gene>
    <name evidence="1" type="primary">atpB</name>
    <name type="ordered locus">MCCL_1762</name>
</gene>
<accession>B9E8F1</accession>
<evidence type="ECO:0000255" key="1">
    <source>
        <dbReference type="HAMAP-Rule" id="MF_01393"/>
    </source>
</evidence>
<protein>
    <recommendedName>
        <fullName evidence="1">ATP synthase subunit a</fullName>
    </recommendedName>
    <alternativeName>
        <fullName evidence="1">ATP synthase F0 sector subunit a</fullName>
    </alternativeName>
    <alternativeName>
        <fullName evidence="1">F-ATPase subunit 6</fullName>
    </alternativeName>
</protein>
<name>ATP6_MACCJ</name>
<reference key="1">
    <citation type="journal article" date="2009" name="J. Bacteriol.">
        <title>Complete genome sequence of Macrococcus caseolyticus strain JCSCS5402, reflecting the ancestral genome of the human-pathogenic staphylococci.</title>
        <authorList>
            <person name="Baba T."/>
            <person name="Kuwahara-Arai K."/>
            <person name="Uchiyama I."/>
            <person name="Takeuchi F."/>
            <person name="Ito T."/>
            <person name="Hiramatsu K."/>
        </authorList>
    </citation>
    <scope>NUCLEOTIDE SEQUENCE [LARGE SCALE GENOMIC DNA]</scope>
    <source>
        <strain>JCSC5402</strain>
    </source>
</reference>
<keyword id="KW-0066">ATP synthesis</keyword>
<keyword id="KW-1003">Cell membrane</keyword>
<keyword id="KW-0138">CF(0)</keyword>
<keyword id="KW-0375">Hydrogen ion transport</keyword>
<keyword id="KW-0406">Ion transport</keyword>
<keyword id="KW-0472">Membrane</keyword>
<keyword id="KW-1185">Reference proteome</keyword>
<keyword id="KW-0812">Transmembrane</keyword>
<keyword id="KW-1133">Transmembrane helix</keyword>
<keyword id="KW-0813">Transport</keyword>
<proteinExistence type="inferred from homology"/>
<sequence length="240" mass="26746">MGHESPLYSLDLFGHEMIFDLSSMLMLTVTAAIVFLIAMLFTRNLSVRPHGKQNFIEWIFDFTRGIINSNMAWNKGGRFHFLAVTLLLFIFVANMLGLPFAIINGHTLWWKSPTADPTVTLTLSTLMVLLTHFYGVKMRGTGNYLKSFAQPVWFMVPFKIIEEFSSTLTLGLRLYGNIFAGEVLLGLLATLGTAGAAGMLGAAIPTLIWQGFSIFVGSIQAYIFVMLSMVYMSHKVSDDH</sequence>
<feature type="chain" id="PRO_1000184286" description="ATP synthase subunit a">
    <location>
        <begin position="1"/>
        <end position="240"/>
    </location>
</feature>
<feature type="transmembrane region" description="Helical" evidence="1">
    <location>
        <begin position="21"/>
        <end position="41"/>
    </location>
</feature>
<feature type="transmembrane region" description="Helical" evidence="1">
    <location>
        <begin position="83"/>
        <end position="103"/>
    </location>
</feature>
<feature type="transmembrane region" description="Helical" evidence="1">
    <location>
        <begin position="116"/>
        <end position="136"/>
    </location>
</feature>
<feature type="transmembrane region" description="Helical" evidence="1">
    <location>
        <begin position="184"/>
        <end position="204"/>
    </location>
</feature>
<feature type="transmembrane region" description="Helical" evidence="1">
    <location>
        <begin position="207"/>
        <end position="227"/>
    </location>
</feature>
<organism>
    <name type="scientific">Macrococcus caseolyticus (strain JCSC5402)</name>
    <name type="common">Macrococcoides caseolyticum</name>
    <dbReference type="NCBI Taxonomy" id="458233"/>
    <lineage>
        <taxon>Bacteria</taxon>
        <taxon>Bacillati</taxon>
        <taxon>Bacillota</taxon>
        <taxon>Bacilli</taxon>
        <taxon>Bacillales</taxon>
        <taxon>Staphylococcaceae</taxon>
        <taxon>Macrococcoides</taxon>
    </lineage>
</organism>